<protein>
    <recommendedName>
        <fullName evidence="1">3-dehydroquinate synthase</fullName>
        <shortName evidence="1">DHQS</shortName>
        <ecNumber evidence="1">4.2.3.4</ecNumber>
    </recommendedName>
</protein>
<comment type="function">
    <text evidence="1">Catalyzes the conversion of 3-deoxy-D-arabino-heptulosonate 7-phosphate (DAHP) to dehydroquinate (DHQ).</text>
</comment>
<comment type="catalytic activity">
    <reaction evidence="1">
        <text>7-phospho-2-dehydro-3-deoxy-D-arabino-heptonate = 3-dehydroquinate + phosphate</text>
        <dbReference type="Rhea" id="RHEA:21968"/>
        <dbReference type="ChEBI" id="CHEBI:32364"/>
        <dbReference type="ChEBI" id="CHEBI:43474"/>
        <dbReference type="ChEBI" id="CHEBI:58394"/>
        <dbReference type="EC" id="4.2.3.4"/>
    </reaction>
</comment>
<comment type="cofactor">
    <cofactor evidence="1">
        <name>Co(2+)</name>
        <dbReference type="ChEBI" id="CHEBI:48828"/>
    </cofactor>
    <cofactor evidence="1">
        <name>Zn(2+)</name>
        <dbReference type="ChEBI" id="CHEBI:29105"/>
    </cofactor>
    <text evidence="1">Binds 1 divalent metal cation per subunit. Can use either Co(2+) or Zn(2+).</text>
</comment>
<comment type="cofactor">
    <cofactor evidence="1">
        <name>NAD(+)</name>
        <dbReference type="ChEBI" id="CHEBI:57540"/>
    </cofactor>
</comment>
<comment type="pathway">
    <text evidence="1">Metabolic intermediate biosynthesis; chorismate biosynthesis; chorismate from D-erythrose 4-phosphate and phosphoenolpyruvate: step 2/7.</text>
</comment>
<comment type="subcellular location">
    <subcellularLocation>
        <location evidence="1">Cytoplasm</location>
    </subcellularLocation>
</comment>
<comment type="similarity">
    <text evidence="1">Belongs to the sugar phosphate cyclases superfamily. Dehydroquinate synthase family.</text>
</comment>
<gene>
    <name evidence="1" type="primary">aroB</name>
    <name type="ordered locus">RHE_CH03825</name>
</gene>
<accession>Q2K3L3</accession>
<organism>
    <name type="scientific">Rhizobium etli (strain ATCC 51251 / DSM 11541 / JCM 21823 / NBRC 15573 / CFN 42)</name>
    <dbReference type="NCBI Taxonomy" id="347834"/>
    <lineage>
        <taxon>Bacteria</taxon>
        <taxon>Pseudomonadati</taxon>
        <taxon>Pseudomonadota</taxon>
        <taxon>Alphaproteobacteria</taxon>
        <taxon>Hyphomicrobiales</taxon>
        <taxon>Rhizobiaceae</taxon>
        <taxon>Rhizobium/Agrobacterium group</taxon>
        <taxon>Rhizobium</taxon>
    </lineage>
</organism>
<feature type="chain" id="PRO_1000094582" description="3-dehydroquinate synthase">
    <location>
        <begin position="1"/>
        <end position="377"/>
    </location>
</feature>
<feature type="binding site" evidence="1">
    <location>
        <begin position="115"/>
        <end position="119"/>
    </location>
    <ligand>
        <name>NAD(+)</name>
        <dbReference type="ChEBI" id="CHEBI:57540"/>
    </ligand>
</feature>
<feature type="binding site" evidence="1">
    <location>
        <begin position="139"/>
        <end position="140"/>
    </location>
    <ligand>
        <name>NAD(+)</name>
        <dbReference type="ChEBI" id="CHEBI:57540"/>
    </ligand>
</feature>
<feature type="binding site" evidence="1">
    <location>
        <position position="152"/>
    </location>
    <ligand>
        <name>NAD(+)</name>
        <dbReference type="ChEBI" id="CHEBI:57540"/>
    </ligand>
</feature>
<feature type="binding site" evidence="1">
    <location>
        <position position="162"/>
    </location>
    <ligand>
        <name>NAD(+)</name>
        <dbReference type="ChEBI" id="CHEBI:57540"/>
    </ligand>
</feature>
<feature type="binding site" evidence="1">
    <location>
        <position position="195"/>
    </location>
    <ligand>
        <name>Zn(2+)</name>
        <dbReference type="ChEBI" id="CHEBI:29105"/>
    </ligand>
</feature>
<feature type="binding site" evidence="1">
    <location>
        <position position="257"/>
    </location>
    <ligand>
        <name>Zn(2+)</name>
        <dbReference type="ChEBI" id="CHEBI:29105"/>
    </ligand>
</feature>
<feature type="binding site" evidence="1">
    <location>
        <position position="276"/>
    </location>
    <ligand>
        <name>Zn(2+)</name>
        <dbReference type="ChEBI" id="CHEBI:29105"/>
    </ligand>
</feature>
<proteinExistence type="inferred from homology"/>
<dbReference type="EC" id="4.2.3.4" evidence="1"/>
<dbReference type="EMBL" id="CP000133">
    <property type="protein sequence ID" value="ABC92573.1"/>
    <property type="molecule type" value="Genomic_DNA"/>
</dbReference>
<dbReference type="RefSeq" id="WP_011427022.1">
    <property type="nucleotide sequence ID" value="NC_007761.1"/>
</dbReference>
<dbReference type="SMR" id="Q2K3L3"/>
<dbReference type="KEGG" id="ret:RHE_CH03825"/>
<dbReference type="eggNOG" id="COG0337">
    <property type="taxonomic scope" value="Bacteria"/>
</dbReference>
<dbReference type="HOGENOM" id="CLU_001201_0_2_5"/>
<dbReference type="OrthoDB" id="9806583at2"/>
<dbReference type="UniPathway" id="UPA00053">
    <property type="reaction ID" value="UER00085"/>
</dbReference>
<dbReference type="Proteomes" id="UP000001936">
    <property type="component" value="Chromosome"/>
</dbReference>
<dbReference type="GO" id="GO:0005737">
    <property type="term" value="C:cytoplasm"/>
    <property type="evidence" value="ECO:0007669"/>
    <property type="project" value="UniProtKB-SubCell"/>
</dbReference>
<dbReference type="GO" id="GO:0003856">
    <property type="term" value="F:3-dehydroquinate synthase activity"/>
    <property type="evidence" value="ECO:0007669"/>
    <property type="project" value="UniProtKB-UniRule"/>
</dbReference>
<dbReference type="GO" id="GO:0046872">
    <property type="term" value="F:metal ion binding"/>
    <property type="evidence" value="ECO:0007669"/>
    <property type="project" value="UniProtKB-KW"/>
</dbReference>
<dbReference type="GO" id="GO:0000166">
    <property type="term" value="F:nucleotide binding"/>
    <property type="evidence" value="ECO:0007669"/>
    <property type="project" value="UniProtKB-KW"/>
</dbReference>
<dbReference type="GO" id="GO:0008652">
    <property type="term" value="P:amino acid biosynthetic process"/>
    <property type="evidence" value="ECO:0007669"/>
    <property type="project" value="UniProtKB-KW"/>
</dbReference>
<dbReference type="GO" id="GO:0009073">
    <property type="term" value="P:aromatic amino acid family biosynthetic process"/>
    <property type="evidence" value="ECO:0007669"/>
    <property type="project" value="UniProtKB-KW"/>
</dbReference>
<dbReference type="GO" id="GO:0009423">
    <property type="term" value="P:chorismate biosynthetic process"/>
    <property type="evidence" value="ECO:0007669"/>
    <property type="project" value="UniProtKB-UniRule"/>
</dbReference>
<dbReference type="CDD" id="cd08195">
    <property type="entry name" value="DHQS"/>
    <property type="match status" value="1"/>
</dbReference>
<dbReference type="FunFam" id="3.40.50.1970:FF:000001">
    <property type="entry name" value="3-dehydroquinate synthase"/>
    <property type="match status" value="1"/>
</dbReference>
<dbReference type="Gene3D" id="3.40.50.1970">
    <property type="match status" value="1"/>
</dbReference>
<dbReference type="Gene3D" id="1.20.1090.10">
    <property type="entry name" value="Dehydroquinate synthase-like - alpha domain"/>
    <property type="match status" value="1"/>
</dbReference>
<dbReference type="HAMAP" id="MF_00110">
    <property type="entry name" value="DHQ_synthase"/>
    <property type="match status" value="1"/>
</dbReference>
<dbReference type="InterPro" id="IPR050071">
    <property type="entry name" value="Dehydroquinate_synthase"/>
</dbReference>
<dbReference type="InterPro" id="IPR016037">
    <property type="entry name" value="DHQ_synth_AroB"/>
</dbReference>
<dbReference type="InterPro" id="IPR030963">
    <property type="entry name" value="DHQ_synth_fam"/>
</dbReference>
<dbReference type="InterPro" id="IPR030960">
    <property type="entry name" value="DHQS/DOIS_N"/>
</dbReference>
<dbReference type="InterPro" id="IPR056179">
    <property type="entry name" value="DHQS_C"/>
</dbReference>
<dbReference type="NCBIfam" id="TIGR01357">
    <property type="entry name" value="aroB"/>
    <property type="match status" value="1"/>
</dbReference>
<dbReference type="PANTHER" id="PTHR43622">
    <property type="entry name" value="3-DEHYDROQUINATE SYNTHASE"/>
    <property type="match status" value="1"/>
</dbReference>
<dbReference type="PANTHER" id="PTHR43622:SF7">
    <property type="entry name" value="3-DEHYDROQUINATE SYNTHASE, CHLOROPLASTIC"/>
    <property type="match status" value="1"/>
</dbReference>
<dbReference type="Pfam" id="PF01761">
    <property type="entry name" value="DHQ_synthase"/>
    <property type="match status" value="1"/>
</dbReference>
<dbReference type="Pfam" id="PF24621">
    <property type="entry name" value="DHQS_C"/>
    <property type="match status" value="1"/>
</dbReference>
<dbReference type="PIRSF" id="PIRSF001455">
    <property type="entry name" value="DHQ_synth"/>
    <property type="match status" value="1"/>
</dbReference>
<dbReference type="SUPFAM" id="SSF56796">
    <property type="entry name" value="Dehydroquinate synthase-like"/>
    <property type="match status" value="1"/>
</dbReference>
<sequence>MNAISSTSAVQTVHVPLGERAYDILIGPGLIARAGTEIASRLKGRKAAIITDENVAPLYLDALVASLDAAGIVSAEVVLPAGEKTKSFEHLITVCDKVLEARVERNDCVIALGGGVIGDLSGFAAGIVRRGVRFVQVPTSLLSQVDSSVGGKTGINSPRHGKNLIGVFHQPDLVLADTDVLNTLSEREFRAGYAEVAKYGLIDKPDFFTWLEANWRSVFTGGSARIEAIAASCQAKADVVVADERENGQRALLNLGHTFGHALEAATAYDSRRLVHGEGVSIGMVLAHEFSARMNLASPDDARRVERHLREVGLPTRMSEIAGELPPAEVLMEAIAQDKKVKSGKLTFILTRGIGQSFVADDVPASEVLSFLREKHP</sequence>
<evidence type="ECO:0000255" key="1">
    <source>
        <dbReference type="HAMAP-Rule" id="MF_00110"/>
    </source>
</evidence>
<reference key="1">
    <citation type="journal article" date="2006" name="Proc. Natl. Acad. Sci. U.S.A.">
        <title>The partitioned Rhizobium etli genome: genetic and metabolic redundancy in seven interacting replicons.</title>
        <authorList>
            <person name="Gonzalez V."/>
            <person name="Santamaria R.I."/>
            <person name="Bustos P."/>
            <person name="Hernandez-Gonzalez I."/>
            <person name="Medrano-Soto A."/>
            <person name="Moreno-Hagelsieb G."/>
            <person name="Janga S.C."/>
            <person name="Ramirez M.A."/>
            <person name="Jimenez-Jacinto V."/>
            <person name="Collado-Vides J."/>
            <person name="Davila G."/>
        </authorList>
    </citation>
    <scope>NUCLEOTIDE SEQUENCE [LARGE SCALE GENOMIC DNA]</scope>
    <source>
        <strain>ATCC 51251 / DSM 11541 / JCM 21823 / NBRC 15573 / CFN 42</strain>
    </source>
</reference>
<name>AROB_RHIEC</name>
<keyword id="KW-0028">Amino-acid biosynthesis</keyword>
<keyword id="KW-0057">Aromatic amino acid biosynthesis</keyword>
<keyword id="KW-0170">Cobalt</keyword>
<keyword id="KW-0963">Cytoplasm</keyword>
<keyword id="KW-0456">Lyase</keyword>
<keyword id="KW-0479">Metal-binding</keyword>
<keyword id="KW-0520">NAD</keyword>
<keyword id="KW-0547">Nucleotide-binding</keyword>
<keyword id="KW-1185">Reference proteome</keyword>
<keyword id="KW-0862">Zinc</keyword>